<protein>
    <recommendedName>
        <fullName evidence="1">Ribosome-binding factor A</fullName>
    </recommendedName>
</protein>
<name>RBFA_POLNA</name>
<dbReference type="EMBL" id="CP000529">
    <property type="protein sequence ID" value="ABM37319.1"/>
    <property type="molecule type" value="Genomic_DNA"/>
</dbReference>
<dbReference type="RefSeq" id="WP_011801399.1">
    <property type="nucleotide sequence ID" value="NC_008781.1"/>
</dbReference>
<dbReference type="SMR" id="A1VNU1"/>
<dbReference type="STRING" id="365044.Pnap_2010"/>
<dbReference type="KEGG" id="pna:Pnap_2010"/>
<dbReference type="eggNOG" id="COG0858">
    <property type="taxonomic scope" value="Bacteria"/>
</dbReference>
<dbReference type="HOGENOM" id="CLU_089475_5_1_4"/>
<dbReference type="OrthoDB" id="307788at2"/>
<dbReference type="Proteomes" id="UP000000644">
    <property type="component" value="Chromosome"/>
</dbReference>
<dbReference type="GO" id="GO:0005829">
    <property type="term" value="C:cytosol"/>
    <property type="evidence" value="ECO:0007669"/>
    <property type="project" value="TreeGrafter"/>
</dbReference>
<dbReference type="GO" id="GO:0043024">
    <property type="term" value="F:ribosomal small subunit binding"/>
    <property type="evidence" value="ECO:0007669"/>
    <property type="project" value="TreeGrafter"/>
</dbReference>
<dbReference type="GO" id="GO:0030490">
    <property type="term" value="P:maturation of SSU-rRNA"/>
    <property type="evidence" value="ECO:0007669"/>
    <property type="project" value="UniProtKB-UniRule"/>
</dbReference>
<dbReference type="Gene3D" id="3.30.300.20">
    <property type="match status" value="1"/>
</dbReference>
<dbReference type="HAMAP" id="MF_00003">
    <property type="entry name" value="RbfA"/>
    <property type="match status" value="1"/>
</dbReference>
<dbReference type="InterPro" id="IPR015946">
    <property type="entry name" value="KH_dom-like_a/b"/>
</dbReference>
<dbReference type="InterPro" id="IPR000238">
    <property type="entry name" value="RbfA"/>
</dbReference>
<dbReference type="InterPro" id="IPR023799">
    <property type="entry name" value="RbfA_dom_sf"/>
</dbReference>
<dbReference type="NCBIfam" id="TIGR00082">
    <property type="entry name" value="rbfA"/>
    <property type="match status" value="1"/>
</dbReference>
<dbReference type="PANTHER" id="PTHR33515">
    <property type="entry name" value="RIBOSOME-BINDING FACTOR A, CHLOROPLASTIC-RELATED"/>
    <property type="match status" value="1"/>
</dbReference>
<dbReference type="PANTHER" id="PTHR33515:SF1">
    <property type="entry name" value="RIBOSOME-BINDING FACTOR A, CHLOROPLASTIC-RELATED"/>
    <property type="match status" value="1"/>
</dbReference>
<dbReference type="Pfam" id="PF02033">
    <property type="entry name" value="RBFA"/>
    <property type="match status" value="1"/>
</dbReference>
<dbReference type="SUPFAM" id="SSF89919">
    <property type="entry name" value="Ribosome-binding factor A, RbfA"/>
    <property type="match status" value="1"/>
</dbReference>
<reference key="1">
    <citation type="journal article" date="2009" name="Environ. Microbiol.">
        <title>The genome of Polaromonas naphthalenivorans strain CJ2, isolated from coal tar-contaminated sediment, reveals physiological and metabolic versatility and evolution through extensive horizontal gene transfer.</title>
        <authorList>
            <person name="Yagi J.M."/>
            <person name="Sims D."/>
            <person name="Brettin T."/>
            <person name="Bruce D."/>
            <person name="Madsen E.L."/>
        </authorList>
    </citation>
    <scope>NUCLEOTIDE SEQUENCE [LARGE SCALE GENOMIC DNA]</scope>
    <source>
        <strain>CJ2</strain>
    </source>
</reference>
<sequence>MRKKSSTPNRGFRVADQIQRDLTELIARELKDPRVGMVTVQSVEVTPDYAHAKIYFSVLVGDPKECEIALNQAAGFLRNGLFKRLMTHTVPTLHFHFDQTTERAADLNALIAKAVSSRAQDD</sequence>
<keyword id="KW-0963">Cytoplasm</keyword>
<keyword id="KW-1185">Reference proteome</keyword>
<keyword id="KW-0690">Ribosome biogenesis</keyword>
<organism>
    <name type="scientific">Polaromonas naphthalenivorans (strain CJ2)</name>
    <dbReference type="NCBI Taxonomy" id="365044"/>
    <lineage>
        <taxon>Bacteria</taxon>
        <taxon>Pseudomonadati</taxon>
        <taxon>Pseudomonadota</taxon>
        <taxon>Betaproteobacteria</taxon>
        <taxon>Burkholderiales</taxon>
        <taxon>Comamonadaceae</taxon>
        <taxon>Polaromonas</taxon>
    </lineage>
</organism>
<gene>
    <name evidence="1" type="primary">rbfA</name>
    <name type="ordered locus">Pnap_2010</name>
</gene>
<proteinExistence type="inferred from homology"/>
<accession>A1VNU1</accession>
<feature type="chain" id="PRO_1000000162" description="Ribosome-binding factor A">
    <location>
        <begin position="1"/>
        <end position="122"/>
    </location>
</feature>
<evidence type="ECO:0000255" key="1">
    <source>
        <dbReference type="HAMAP-Rule" id="MF_00003"/>
    </source>
</evidence>
<comment type="function">
    <text evidence="1">One of several proteins that assist in the late maturation steps of the functional core of the 30S ribosomal subunit. Associates with free 30S ribosomal subunits (but not with 30S subunits that are part of 70S ribosomes or polysomes). Required for efficient processing of 16S rRNA. May interact with the 5'-terminal helix region of 16S rRNA.</text>
</comment>
<comment type="subunit">
    <text evidence="1">Monomer. Binds 30S ribosomal subunits, but not 50S ribosomal subunits or 70S ribosomes.</text>
</comment>
<comment type="subcellular location">
    <subcellularLocation>
        <location evidence="1">Cytoplasm</location>
    </subcellularLocation>
</comment>
<comment type="similarity">
    <text evidence="1">Belongs to the RbfA family.</text>
</comment>